<gene>
    <name type="primary">myd88</name>
</gene>
<keyword id="KW-0963">Cytoplasm</keyword>
<keyword id="KW-0391">Immunity</keyword>
<keyword id="KW-0395">Inflammatory response</keyword>
<keyword id="KW-0399">Innate immunity</keyword>
<keyword id="KW-1185">Reference proteome</keyword>
<proteinExistence type="evidence at transcript level"/>
<name>MYD88_DANRE</name>
<comment type="function">
    <text evidence="4">Adapter protein involved in the Toll-like receptor and Il-1 receptor signaling pathway in the innate immune response.</text>
</comment>
<comment type="subcellular location">
    <subcellularLocation>
        <location evidence="1">Cytoplasm</location>
    </subcellularLocation>
</comment>
<comment type="developmental stage">
    <text evidence="4">Expression is highest in adults. In the embryo, maternal transcript levels are reduced during blastula and gastrula stages. Expression increases during segmentation and later stages.</text>
</comment>
<comment type="domain">
    <text evidence="1">The intermediate domain (ID) is required for the phosphorylation and activation of IRAK.</text>
</comment>
<reference key="1">
    <citation type="journal article" date="2004" name="Mol. Immunol.">
        <title>Expression analysis of the Toll-like receptor and TIR domain adaptor families of zebrafish.</title>
        <authorList>
            <person name="Meijer A.H."/>
            <person name="Krens S.F.G."/>
            <person name="Medina Rodriguez I.A."/>
            <person name="He S."/>
            <person name="Bitter W."/>
            <person name="Snaar-Jagalska B.E."/>
            <person name="Spaink H.P."/>
        </authorList>
    </citation>
    <scope>NUCLEOTIDE SEQUENCE [MRNA]</scope>
    <source>
        <strain>Tuebingen</strain>
    </source>
</reference>
<reference key="2">
    <citation type="journal article" date="2006" name="Infect. Immun.">
        <title>MyD88 innate immune function in a zebrafish embryo infection model.</title>
        <authorList>
            <person name="van der Sar A.M."/>
            <person name="Stockhammer O.W."/>
            <person name="van der Laan C."/>
            <person name="Spaink H.P."/>
            <person name="Bitter W."/>
            <person name="Meijer A.H."/>
        </authorList>
    </citation>
    <scope>NUCLEOTIDE SEQUENCE [MRNA]</scope>
    <scope>FUNCTION</scope>
    <scope>DEVELOPMENTAL STAGE</scope>
</reference>
<reference key="3">
    <citation type="submission" date="2004-10" db="EMBL/GenBank/DDBJ databases">
        <authorList>
            <consortium name="NIH - Zebrafish Gene Collection (ZGC) project"/>
        </authorList>
    </citation>
    <scope>NUCLEOTIDE SEQUENCE [LARGE SCALE MRNA]</scope>
    <source>
        <tissue>Ovary</tissue>
    </source>
</reference>
<protein>
    <recommendedName>
        <fullName>Myeloid differentiation primary response protein MyD88</fullName>
    </recommendedName>
</protein>
<dbReference type="EMBL" id="AY388401">
    <property type="protein sequence ID" value="AAQ90476.1"/>
    <property type="molecule type" value="mRNA"/>
</dbReference>
<dbReference type="EMBL" id="AY389463">
    <property type="protein sequence ID" value="AAQ91324.1"/>
    <property type="molecule type" value="mRNA"/>
</dbReference>
<dbReference type="EMBL" id="DQ100359">
    <property type="protein sequence ID" value="AAZ16494.1"/>
    <property type="molecule type" value="mRNA"/>
</dbReference>
<dbReference type="EMBL" id="BC083419">
    <property type="protein sequence ID" value="AAH83419.1"/>
    <property type="molecule type" value="mRNA"/>
</dbReference>
<dbReference type="RefSeq" id="NP_997979.2">
    <property type="nucleotide sequence ID" value="NM_212814.2"/>
</dbReference>
<dbReference type="SMR" id="Q5XJ85"/>
<dbReference type="FunCoup" id="Q5XJ85">
    <property type="interactions" value="2517"/>
</dbReference>
<dbReference type="STRING" id="7955.ENSDARP00000020711"/>
<dbReference type="PaxDb" id="7955-ENSDARP00000020711"/>
<dbReference type="GeneID" id="403145"/>
<dbReference type="KEGG" id="dre:403145"/>
<dbReference type="AGR" id="ZFIN:ZDB-GENE-040219-3"/>
<dbReference type="CTD" id="4615"/>
<dbReference type="ZFIN" id="ZDB-GENE-040219-3">
    <property type="gene designation" value="myd88"/>
</dbReference>
<dbReference type="eggNOG" id="ENOG502QWKI">
    <property type="taxonomic scope" value="Eukaryota"/>
</dbReference>
<dbReference type="InParanoid" id="Q5XJ85"/>
<dbReference type="OrthoDB" id="10037120at2759"/>
<dbReference type="PhylomeDB" id="Q5XJ85"/>
<dbReference type="TreeFam" id="TF326264"/>
<dbReference type="Reactome" id="R-DRE-209543">
    <property type="pathway name" value="p75NTR recruits signalling complexes"/>
</dbReference>
<dbReference type="PRO" id="PR:Q5XJ85"/>
<dbReference type="Proteomes" id="UP000000437">
    <property type="component" value="Chromosome 24"/>
</dbReference>
<dbReference type="GO" id="GO:0005737">
    <property type="term" value="C:cytoplasm"/>
    <property type="evidence" value="ECO:0007669"/>
    <property type="project" value="UniProtKB-SubCell"/>
</dbReference>
<dbReference type="GO" id="GO:0005886">
    <property type="term" value="C:plasma membrane"/>
    <property type="evidence" value="ECO:0000318"/>
    <property type="project" value="GO_Central"/>
</dbReference>
<dbReference type="GO" id="GO:0070976">
    <property type="term" value="F:TIR domain binding"/>
    <property type="evidence" value="ECO:0007669"/>
    <property type="project" value="InterPro"/>
</dbReference>
<dbReference type="GO" id="GO:0035325">
    <property type="term" value="F:Toll-like receptor binding"/>
    <property type="evidence" value="ECO:0000318"/>
    <property type="project" value="GO_Central"/>
</dbReference>
<dbReference type="GO" id="GO:0002218">
    <property type="term" value="P:activation of innate immune response"/>
    <property type="evidence" value="ECO:0000315"/>
    <property type="project" value="ZFIN"/>
</dbReference>
<dbReference type="GO" id="GO:0042742">
    <property type="term" value="P:defense response to bacterium"/>
    <property type="evidence" value="ECO:0000315"/>
    <property type="project" value="ZFIN"/>
</dbReference>
<dbReference type="GO" id="GO:0050830">
    <property type="term" value="P:defense response to Gram-positive bacterium"/>
    <property type="evidence" value="ECO:0000318"/>
    <property type="project" value="GO_Central"/>
</dbReference>
<dbReference type="GO" id="GO:0090594">
    <property type="term" value="P:inflammatory response to wounding"/>
    <property type="evidence" value="ECO:0000315"/>
    <property type="project" value="ZFIN"/>
</dbReference>
<dbReference type="GO" id="GO:0045087">
    <property type="term" value="P:innate immune response"/>
    <property type="evidence" value="ECO:0000315"/>
    <property type="project" value="ZFIN"/>
</dbReference>
<dbReference type="GO" id="GO:0042117">
    <property type="term" value="P:monocyte activation"/>
    <property type="evidence" value="ECO:0000315"/>
    <property type="project" value="ZFIN"/>
</dbReference>
<dbReference type="GO" id="GO:0002755">
    <property type="term" value="P:MyD88-dependent toll-like receptor signaling pathway"/>
    <property type="evidence" value="ECO:0007669"/>
    <property type="project" value="InterPro"/>
</dbReference>
<dbReference type="GO" id="GO:0002283">
    <property type="term" value="P:neutrophil activation involved in immune response"/>
    <property type="evidence" value="ECO:0000315"/>
    <property type="project" value="ZFIN"/>
</dbReference>
<dbReference type="GO" id="GO:0030593">
    <property type="term" value="P:neutrophil chemotaxis"/>
    <property type="evidence" value="ECO:0000315"/>
    <property type="project" value="ZFIN"/>
</dbReference>
<dbReference type="GO" id="GO:0043123">
    <property type="term" value="P:positive regulation of canonical NF-kappaB signal transduction"/>
    <property type="evidence" value="ECO:0007669"/>
    <property type="project" value="InterPro"/>
</dbReference>
<dbReference type="GO" id="GO:1901534">
    <property type="term" value="P:positive regulation of hematopoietic progenitor cell differentiation"/>
    <property type="evidence" value="ECO:0000315"/>
    <property type="project" value="ZFIN"/>
</dbReference>
<dbReference type="GO" id="GO:1901224">
    <property type="term" value="P:positive regulation of non-canonical NF-kappaB signal transduction"/>
    <property type="evidence" value="ECO:0000315"/>
    <property type="project" value="ZFIN"/>
</dbReference>
<dbReference type="GO" id="GO:1901532">
    <property type="term" value="P:regulation of hematopoietic progenitor cell differentiation"/>
    <property type="evidence" value="ECO:0000316"/>
    <property type="project" value="ZFIN"/>
</dbReference>
<dbReference type="GO" id="GO:1905521">
    <property type="term" value="P:regulation of macrophage migration"/>
    <property type="evidence" value="ECO:0000315"/>
    <property type="project" value="ZFIN"/>
</dbReference>
<dbReference type="GO" id="GO:1902622">
    <property type="term" value="P:regulation of neutrophil migration"/>
    <property type="evidence" value="ECO:0000315"/>
    <property type="project" value="ZFIN"/>
</dbReference>
<dbReference type="GO" id="GO:0002237">
    <property type="term" value="P:response to molecule of bacterial origin"/>
    <property type="evidence" value="ECO:0000315"/>
    <property type="project" value="ZFIN"/>
</dbReference>
<dbReference type="GO" id="GO:0008063">
    <property type="term" value="P:Toll signaling pathway"/>
    <property type="evidence" value="ECO:0000318"/>
    <property type="project" value="GO_Central"/>
</dbReference>
<dbReference type="GO" id="GO:0034142">
    <property type="term" value="P:toll-like receptor 4 signaling pathway"/>
    <property type="evidence" value="ECO:0000318"/>
    <property type="project" value="GO_Central"/>
</dbReference>
<dbReference type="CDD" id="cd08312">
    <property type="entry name" value="Death_MyD88"/>
    <property type="match status" value="1"/>
</dbReference>
<dbReference type="FunFam" id="1.10.533.10:FF:000029">
    <property type="entry name" value="Myeloid differentiation primary response protein MyD88"/>
    <property type="match status" value="1"/>
</dbReference>
<dbReference type="FunFam" id="3.40.50.10140:FF:000005">
    <property type="entry name" value="Myeloid differentiation primary response protein MyD88"/>
    <property type="match status" value="1"/>
</dbReference>
<dbReference type="Gene3D" id="1.10.533.10">
    <property type="entry name" value="Death Domain, Fas"/>
    <property type="match status" value="1"/>
</dbReference>
<dbReference type="Gene3D" id="3.40.50.10140">
    <property type="entry name" value="Toll/interleukin-1 receptor homology (TIR) domain"/>
    <property type="match status" value="1"/>
</dbReference>
<dbReference type="InterPro" id="IPR011029">
    <property type="entry name" value="DEATH-like_dom_sf"/>
</dbReference>
<dbReference type="InterPro" id="IPR000488">
    <property type="entry name" value="Death_dom"/>
</dbReference>
<dbReference type="InterPro" id="IPR034249">
    <property type="entry name" value="MyD88_Death"/>
</dbReference>
<dbReference type="InterPro" id="IPR017281">
    <property type="entry name" value="Myelin_different_resp_MyD88"/>
</dbReference>
<dbReference type="InterPro" id="IPR000157">
    <property type="entry name" value="TIR_dom"/>
</dbReference>
<dbReference type="InterPro" id="IPR035897">
    <property type="entry name" value="Toll_tir_struct_dom_sf"/>
</dbReference>
<dbReference type="PANTHER" id="PTHR15079">
    <property type="entry name" value="MYD88"/>
    <property type="match status" value="1"/>
</dbReference>
<dbReference type="PANTHER" id="PTHR15079:SF3">
    <property type="entry name" value="MYELOID DIFFERENTIATION PRIMARY RESPONSE PROTEIN MYD88"/>
    <property type="match status" value="1"/>
</dbReference>
<dbReference type="Pfam" id="PF00531">
    <property type="entry name" value="Death"/>
    <property type="match status" value="1"/>
</dbReference>
<dbReference type="Pfam" id="PF13676">
    <property type="entry name" value="TIR_2"/>
    <property type="match status" value="1"/>
</dbReference>
<dbReference type="PIRSF" id="PIRSF037756">
    <property type="entry name" value="MyD88"/>
    <property type="match status" value="1"/>
</dbReference>
<dbReference type="SMART" id="SM00005">
    <property type="entry name" value="DEATH"/>
    <property type="match status" value="1"/>
</dbReference>
<dbReference type="SMART" id="SM00255">
    <property type="entry name" value="TIR"/>
    <property type="match status" value="1"/>
</dbReference>
<dbReference type="SUPFAM" id="SSF47986">
    <property type="entry name" value="DEATH domain"/>
    <property type="match status" value="1"/>
</dbReference>
<dbReference type="SUPFAM" id="SSF52200">
    <property type="entry name" value="Toll/Interleukin receptor TIR domain"/>
    <property type="match status" value="1"/>
</dbReference>
<dbReference type="PROSITE" id="PS50017">
    <property type="entry name" value="DEATH_DOMAIN"/>
    <property type="match status" value="1"/>
</dbReference>
<dbReference type="PROSITE" id="PS50104">
    <property type="entry name" value="TIR"/>
    <property type="match status" value="1"/>
</dbReference>
<organism>
    <name type="scientific">Danio rerio</name>
    <name type="common">Zebrafish</name>
    <name type="synonym">Brachydanio rerio</name>
    <dbReference type="NCBI Taxonomy" id="7955"/>
    <lineage>
        <taxon>Eukaryota</taxon>
        <taxon>Metazoa</taxon>
        <taxon>Chordata</taxon>
        <taxon>Craniata</taxon>
        <taxon>Vertebrata</taxon>
        <taxon>Euteleostomi</taxon>
        <taxon>Actinopterygii</taxon>
        <taxon>Neopterygii</taxon>
        <taxon>Teleostei</taxon>
        <taxon>Ostariophysi</taxon>
        <taxon>Cypriniformes</taxon>
        <taxon>Danionidae</taxon>
        <taxon>Danioninae</taxon>
        <taxon>Danio</taxon>
    </lineage>
</organism>
<feature type="chain" id="PRO_0000393141" description="Myeloid differentiation primary response protein MyD88">
    <location>
        <begin position="1"/>
        <end position="284"/>
    </location>
</feature>
<feature type="domain" description="Death" evidence="2">
    <location>
        <begin position="24"/>
        <end position="101"/>
    </location>
</feature>
<feature type="domain" description="TIR" evidence="3">
    <location>
        <begin position="147"/>
        <end position="281"/>
    </location>
</feature>
<feature type="region of interest" description="Intermediate domain" evidence="1">
    <location>
        <begin position="102"/>
        <end position="143"/>
    </location>
</feature>
<feature type="sequence conflict" description="In Ref. 1; AAQ90476." evidence="5" ref="1">
    <original>I</original>
    <variation>L</variation>
    <location>
        <position position="7"/>
    </location>
</feature>
<feature type="sequence conflict" description="In Ref. 2; AAZ16494." evidence="5" ref="2">
    <original>D</original>
    <variation>E</variation>
    <location>
        <position position="60"/>
    </location>
</feature>
<feature type="sequence conflict" description="In Ref. 3; AAH83419." evidence="5" ref="3">
    <original>I</original>
    <variation>V</variation>
    <location>
        <position position="135"/>
    </location>
</feature>
<accession>Q5XJ85</accession>
<accession>Q45VT5</accession>
<accession>Q6TQG4</accession>
<accession>Q6TS40</accession>
<sequence>MASKLSIDHEAIPVTALNCSFRKKLGLFLNPTNTVAADWRTVAELMDFTYLEIKNFEKRDCPFEKVLTDWETRPDATVANLLSILEKAERKDVISELKEILDDDCRKYMERQQRKPLQVPVVDSCGPRTQEREGITLYDDPQGLTPETFDAFICYCQSDIQFVHEMIKQLEHTEYNLKLCVFDRDVLPGTCVWTIASELIEKRCKRMVVVISDDYLDSDACDFQTKFALSLCPGARTKRLIPVVYKSMKRPFPSILRFLTICDYSKPCTQVWFWTRLAKALSLP</sequence>
<evidence type="ECO:0000250" key="1"/>
<evidence type="ECO:0000255" key="2">
    <source>
        <dbReference type="PROSITE-ProRule" id="PRU00064"/>
    </source>
</evidence>
<evidence type="ECO:0000255" key="3">
    <source>
        <dbReference type="PROSITE-ProRule" id="PRU00204"/>
    </source>
</evidence>
<evidence type="ECO:0000269" key="4">
    <source>
    </source>
</evidence>
<evidence type="ECO:0000305" key="5"/>